<name>TOLB_VIBVY</name>
<comment type="function">
    <text evidence="1">Part of the Tol-Pal system, which plays a role in outer membrane invagination during cell division and is important for maintaining outer membrane integrity.</text>
</comment>
<comment type="subunit">
    <text evidence="1">The Tol-Pal system is composed of five core proteins: the inner membrane proteins TolA, TolQ and TolR, the periplasmic protein TolB and the outer membrane protein Pal. They form a network linking the inner and outer membranes and the peptidoglycan layer.</text>
</comment>
<comment type="subcellular location">
    <subcellularLocation>
        <location evidence="1">Periplasm</location>
    </subcellularLocation>
</comment>
<comment type="similarity">
    <text evidence="1">Belongs to the TolB family.</text>
</comment>
<dbReference type="EMBL" id="BA000037">
    <property type="protein sequence ID" value="BAC95039.1"/>
    <property type="molecule type" value="Genomic_DNA"/>
</dbReference>
<dbReference type="RefSeq" id="WP_011150783.1">
    <property type="nucleotide sequence ID" value="NC_005139.1"/>
</dbReference>
<dbReference type="SMR" id="Q7MJ87"/>
<dbReference type="STRING" id="672.VV93_v1c19850"/>
<dbReference type="KEGG" id="vvy:VV2275"/>
<dbReference type="eggNOG" id="COG0823">
    <property type="taxonomic scope" value="Bacteria"/>
</dbReference>
<dbReference type="HOGENOM" id="CLU_047123_0_0_6"/>
<dbReference type="Proteomes" id="UP000002675">
    <property type="component" value="Chromosome I"/>
</dbReference>
<dbReference type="GO" id="GO:0042597">
    <property type="term" value="C:periplasmic space"/>
    <property type="evidence" value="ECO:0007669"/>
    <property type="project" value="UniProtKB-SubCell"/>
</dbReference>
<dbReference type="GO" id="GO:0051301">
    <property type="term" value="P:cell division"/>
    <property type="evidence" value="ECO:0007669"/>
    <property type="project" value="UniProtKB-UniRule"/>
</dbReference>
<dbReference type="GO" id="GO:0017038">
    <property type="term" value="P:protein import"/>
    <property type="evidence" value="ECO:0007669"/>
    <property type="project" value="InterPro"/>
</dbReference>
<dbReference type="Gene3D" id="2.120.10.30">
    <property type="entry name" value="TolB, C-terminal domain"/>
    <property type="match status" value="1"/>
</dbReference>
<dbReference type="Gene3D" id="3.40.50.10070">
    <property type="entry name" value="TolB, N-terminal domain"/>
    <property type="match status" value="1"/>
</dbReference>
<dbReference type="HAMAP" id="MF_00671">
    <property type="entry name" value="TolB"/>
    <property type="match status" value="1"/>
</dbReference>
<dbReference type="InterPro" id="IPR011042">
    <property type="entry name" value="6-blade_b-propeller_TolB-like"/>
</dbReference>
<dbReference type="InterPro" id="IPR011659">
    <property type="entry name" value="PD40"/>
</dbReference>
<dbReference type="InterPro" id="IPR014167">
    <property type="entry name" value="Tol-Pal_TolB"/>
</dbReference>
<dbReference type="InterPro" id="IPR007195">
    <property type="entry name" value="TolB_N"/>
</dbReference>
<dbReference type="NCBIfam" id="TIGR02800">
    <property type="entry name" value="propeller_TolB"/>
    <property type="match status" value="1"/>
</dbReference>
<dbReference type="PANTHER" id="PTHR36842:SF1">
    <property type="entry name" value="PROTEIN TOLB"/>
    <property type="match status" value="1"/>
</dbReference>
<dbReference type="PANTHER" id="PTHR36842">
    <property type="entry name" value="PROTEIN TOLB HOMOLOG"/>
    <property type="match status" value="1"/>
</dbReference>
<dbReference type="Pfam" id="PF07676">
    <property type="entry name" value="PD40"/>
    <property type="match status" value="3"/>
</dbReference>
<dbReference type="Pfam" id="PF04052">
    <property type="entry name" value="TolB_N"/>
    <property type="match status" value="1"/>
</dbReference>
<dbReference type="SUPFAM" id="SSF52964">
    <property type="entry name" value="TolB, N-terminal domain"/>
    <property type="match status" value="1"/>
</dbReference>
<dbReference type="SUPFAM" id="SSF69304">
    <property type="entry name" value="Tricorn protease N-terminal domain"/>
    <property type="match status" value="1"/>
</dbReference>
<feature type="signal peptide" evidence="1">
    <location>
        <begin position="1"/>
        <end position="22"/>
    </location>
</feature>
<feature type="chain" id="PRO_0000034693" description="Tol-Pal system protein TolB" evidence="1">
    <location>
        <begin position="23"/>
        <end position="449"/>
    </location>
</feature>
<sequence>MKKRLLMGLLVLLSSVTNVANAALELIITDGIDSARPIAIVPFKWQGTKALPVDISSVVASDLQRSGKFSPVPTSKMPQTPYNESEINFDAWTNLGVDTLLTGSVTQNEKGEYVINYQLVDVVRGQLTSGQSRALEDGQLVLSKDHVLFNKVATITAPRMREYAHRISDLIYEQLTGERGAFLTRIAYVVVNDKDKFPYQLRVADYDGFNERLVLRSKQPLMSPAWSPDGRQLAYVSFQNGQAEIFVLNIYTGEHEKLTSFPRHNGAPRFSPDGKKLAIVLSKTGSLQIYTLDLQTRQLTQITRDRSNNTEPFWHPDGKSLIFTSDRGGKPQIYRVNLSDGSTSRLTWQGSQNLGGQITPDGRFLIMVNRSDSGFNLAKQDLETGAVQVLTKTLLDESPSIAPNGGMVIYSSIYDKKNVLSMVSIDGRFKARLPATNGRVRAPAWSPFL</sequence>
<proteinExistence type="inferred from homology"/>
<gene>
    <name evidence="1" type="primary">tolB</name>
    <name type="ordered locus">VV2275</name>
</gene>
<keyword id="KW-0131">Cell cycle</keyword>
<keyword id="KW-0132">Cell division</keyword>
<keyword id="KW-0574">Periplasm</keyword>
<keyword id="KW-0732">Signal</keyword>
<organism>
    <name type="scientific">Vibrio vulnificus (strain YJ016)</name>
    <dbReference type="NCBI Taxonomy" id="196600"/>
    <lineage>
        <taxon>Bacteria</taxon>
        <taxon>Pseudomonadati</taxon>
        <taxon>Pseudomonadota</taxon>
        <taxon>Gammaproteobacteria</taxon>
        <taxon>Vibrionales</taxon>
        <taxon>Vibrionaceae</taxon>
        <taxon>Vibrio</taxon>
    </lineage>
</organism>
<reference key="1">
    <citation type="journal article" date="2003" name="Genome Res.">
        <title>Comparative genome analysis of Vibrio vulnificus, a marine pathogen.</title>
        <authorList>
            <person name="Chen C.-Y."/>
            <person name="Wu K.-M."/>
            <person name="Chang Y.-C."/>
            <person name="Chang C.-H."/>
            <person name="Tsai H.-C."/>
            <person name="Liao T.-L."/>
            <person name="Liu Y.-M."/>
            <person name="Chen H.-J."/>
            <person name="Shen A.B.-T."/>
            <person name="Li J.-C."/>
            <person name="Su T.-L."/>
            <person name="Shao C.-P."/>
            <person name="Lee C.-T."/>
            <person name="Hor L.-I."/>
            <person name="Tsai S.-F."/>
        </authorList>
    </citation>
    <scope>NUCLEOTIDE SEQUENCE [LARGE SCALE GENOMIC DNA]</scope>
    <source>
        <strain>YJ016</strain>
    </source>
</reference>
<protein>
    <recommendedName>
        <fullName evidence="1">Tol-Pal system protein TolB</fullName>
    </recommendedName>
</protein>
<accession>Q7MJ87</accession>
<evidence type="ECO:0000255" key="1">
    <source>
        <dbReference type="HAMAP-Rule" id="MF_00671"/>
    </source>
</evidence>